<protein>
    <recommendedName>
        <fullName evidence="1">Sulfate adenylyltransferase subunit 2</fullName>
        <ecNumber evidence="1">2.7.7.4</ecNumber>
    </recommendedName>
    <alternativeName>
        <fullName evidence="1">ATP-sulfurylase small subunit</fullName>
    </alternativeName>
    <alternativeName>
        <fullName evidence="1">Sulfate adenylate transferase</fullName>
        <shortName evidence="1">SAT</shortName>
    </alternativeName>
</protein>
<feature type="chain" id="PRO_1000117940" description="Sulfate adenylyltransferase subunit 2">
    <location>
        <begin position="1"/>
        <end position="302"/>
    </location>
</feature>
<accession>B7LEH0</accession>
<gene>
    <name evidence="1" type="primary">cysD</name>
    <name type="ordered locus">EC55989_3025</name>
</gene>
<reference key="1">
    <citation type="journal article" date="2009" name="PLoS Genet.">
        <title>Organised genome dynamics in the Escherichia coli species results in highly diverse adaptive paths.</title>
        <authorList>
            <person name="Touchon M."/>
            <person name="Hoede C."/>
            <person name="Tenaillon O."/>
            <person name="Barbe V."/>
            <person name="Baeriswyl S."/>
            <person name="Bidet P."/>
            <person name="Bingen E."/>
            <person name="Bonacorsi S."/>
            <person name="Bouchier C."/>
            <person name="Bouvet O."/>
            <person name="Calteau A."/>
            <person name="Chiapello H."/>
            <person name="Clermont O."/>
            <person name="Cruveiller S."/>
            <person name="Danchin A."/>
            <person name="Diard M."/>
            <person name="Dossat C."/>
            <person name="Karoui M.E."/>
            <person name="Frapy E."/>
            <person name="Garry L."/>
            <person name="Ghigo J.M."/>
            <person name="Gilles A.M."/>
            <person name="Johnson J."/>
            <person name="Le Bouguenec C."/>
            <person name="Lescat M."/>
            <person name="Mangenot S."/>
            <person name="Martinez-Jehanne V."/>
            <person name="Matic I."/>
            <person name="Nassif X."/>
            <person name="Oztas S."/>
            <person name="Petit M.A."/>
            <person name="Pichon C."/>
            <person name="Rouy Z."/>
            <person name="Ruf C.S."/>
            <person name="Schneider D."/>
            <person name="Tourret J."/>
            <person name="Vacherie B."/>
            <person name="Vallenet D."/>
            <person name="Medigue C."/>
            <person name="Rocha E.P.C."/>
            <person name="Denamur E."/>
        </authorList>
    </citation>
    <scope>NUCLEOTIDE SEQUENCE [LARGE SCALE GENOMIC DNA]</scope>
    <source>
        <strain>55989 / EAEC</strain>
    </source>
</reference>
<name>CYSD_ECO55</name>
<sequence length="302" mass="35188">MDQIRLTHLRQLEAESIHIIREVAAEFSNPVMLYSIGKDSSVMLHLARKAFYPGTLPFPLLHVDTGWKFREMYEFRDRTAKAYGCELLVHKNPEGVAMGINPFVHGSAKHTDIMKTEGLKQALNKYGFDAAFGGARRDEEKSRAKERIYSFRDRFHRWDPKNQRPELWHNYNGQINKGESIRVFPLSNWTEQDIWQYIWLENIDIVPLYLAAERPVLERDGMLMMIDDNRIDLQPGEVIKKRMVRFRTLGCWPLTGAVESNAQTLPEIIEEMLVSTTSERQGRVIDRDQAGSMELKKRQGYF</sequence>
<dbReference type="EC" id="2.7.7.4" evidence="1"/>
<dbReference type="EMBL" id="CU928145">
    <property type="protein sequence ID" value="CAU98907.1"/>
    <property type="molecule type" value="Genomic_DNA"/>
</dbReference>
<dbReference type="RefSeq" id="WP_000372108.1">
    <property type="nucleotide sequence ID" value="NC_011748.1"/>
</dbReference>
<dbReference type="SMR" id="B7LEH0"/>
<dbReference type="GeneID" id="93779254"/>
<dbReference type="KEGG" id="eck:EC55989_3025"/>
<dbReference type="HOGENOM" id="CLU_043026_0_0_6"/>
<dbReference type="UniPathway" id="UPA00140">
    <property type="reaction ID" value="UER00204"/>
</dbReference>
<dbReference type="Proteomes" id="UP000000746">
    <property type="component" value="Chromosome"/>
</dbReference>
<dbReference type="GO" id="GO:0005524">
    <property type="term" value="F:ATP binding"/>
    <property type="evidence" value="ECO:0007669"/>
    <property type="project" value="UniProtKB-KW"/>
</dbReference>
<dbReference type="GO" id="GO:0004781">
    <property type="term" value="F:sulfate adenylyltransferase (ATP) activity"/>
    <property type="evidence" value="ECO:0007669"/>
    <property type="project" value="UniProtKB-UniRule"/>
</dbReference>
<dbReference type="GO" id="GO:0070814">
    <property type="term" value="P:hydrogen sulfide biosynthetic process"/>
    <property type="evidence" value="ECO:0007669"/>
    <property type="project" value="UniProtKB-UniRule"/>
</dbReference>
<dbReference type="GO" id="GO:0000103">
    <property type="term" value="P:sulfate assimilation"/>
    <property type="evidence" value="ECO:0007669"/>
    <property type="project" value="UniProtKB-UniRule"/>
</dbReference>
<dbReference type="CDD" id="cd23946">
    <property type="entry name" value="Sulfate_adenylyltransferase_2"/>
    <property type="match status" value="1"/>
</dbReference>
<dbReference type="FunFam" id="3.40.50.620:FF:000002">
    <property type="entry name" value="Sulfate adenylyltransferase subunit 2"/>
    <property type="match status" value="1"/>
</dbReference>
<dbReference type="Gene3D" id="3.40.50.620">
    <property type="entry name" value="HUPs"/>
    <property type="match status" value="1"/>
</dbReference>
<dbReference type="HAMAP" id="MF_00064">
    <property type="entry name" value="Sulf_adenylyltr_sub2"/>
    <property type="match status" value="1"/>
</dbReference>
<dbReference type="InterPro" id="IPR002500">
    <property type="entry name" value="PAPS_reduct_dom"/>
</dbReference>
<dbReference type="InterPro" id="IPR014729">
    <property type="entry name" value="Rossmann-like_a/b/a_fold"/>
</dbReference>
<dbReference type="InterPro" id="IPR011784">
    <property type="entry name" value="SO4_adenylTrfase_ssu"/>
</dbReference>
<dbReference type="InterPro" id="IPR050128">
    <property type="entry name" value="Sulfate_adenylyltrnsfr_sub2"/>
</dbReference>
<dbReference type="NCBIfam" id="TIGR02039">
    <property type="entry name" value="CysD"/>
    <property type="match status" value="1"/>
</dbReference>
<dbReference type="NCBIfam" id="NF003587">
    <property type="entry name" value="PRK05253.1"/>
    <property type="match status" value="1"/>
</dbReference>
<dbReference type="NCBIfam" id="NF009214">
    <property type="entry name" value="PRK12563.1"/>
    <property type="match status" value="1"/>
</dbReference>
<dbReference type="PANTHER" id="PTHR43196">
    <property type="entry name" value="SULFATE ADENYLYLTRANSFERASE SUBUNIT 2"/>
    <property type="match status" value="1"/>
</dbReference>
<dbReference type="PANTHER" id="PTHR43196:SF1">
    <property type="entry name" value="SULFATE ADENYLYLTRANSFERASE SUBUNIT 2"/>
    <property type="match status" value="1"/>
</dbReference>
<dbReference type="Pfam" id="PF01507">
    <property type="entry name" value="PAPS_reduct"/>
    <property type="match status" value="1"/>
</dbReference>
<dbReference type="PIRSF" id="PIRSF002936">
    <property type="entry name" value="CysDAde_trans"/>
    <property type="match status" value="1"/>
</dbReference>
<dbReference type="SUPFAM" id="SSF52402">
    <property type="entry name" value="Adenine nucleotide alpha hydrolases-like"/>
    <property type="match status" value="1"/>
</dbReference>
<comment type="function">
    <text evidence="1">With CysN forms the ATP sulfurylase (ATPS) that catalyzes the adenylation of sulfate producing adenosine 5'-phosphosulfate (APS) and diphosphate, the first enzymatic step in sulfur assimilation pathway. APS synthesis involves the formation of a high-energy phosphoric-sulfuric acid anhydride bond driven by GTP hydrolysis by CysN coupled to ATP hydrolysis by CysD.</text>
</comment>
<comment type="catalytic activity">
    <reaction evidence="1">
        <text>sulfate + ATP + H(+) = adenosine 5'-phosphosulfate + diphosphate</text>
        <dbReference type="Rhea" id="RHEA:18133"/>
        <dbReference type="ChEBI" id="CHEBI:15378"/>
        <dbReference type="ChEBI" id="CHEBI:16189"/>
        <dbReference type="ChEBI" id="CHEBI:30616"/>
        <dbReference type="ChEBI" id="CHEBI:33019"/>
        <dbReference type="ChEBI" id="CHEBI:58243"/>
        <dbReference type="EC" id="2.7.7.4"/>
    </reaction>
</comment>
<comment type="pathway">
    <text evidence="1">Sulfur metabolism; hydrogen sulfide biosynthesis; sulfite from sulfate: step 1/3.</text>
</comment>
<comment type="subunit">
    <text evidence="1">Heterodimer composed of CysD, the smaller subunit, and CysN.</text>
</comment>
<comment type="similarity">
    <text evidence="1">Belongs to the PAPS reductase family. CysD subfamily.</text>
</comment>
<evidence type="ECO:0000255" key="1">
    <source>
        <dbReference type="HAMAP-Rule" id="MF_00064"/>
    </source>
</evidence>
<organism>
    <name type="scientific">Escherichia coli (strain 55989 / EAEC)</name>
    <dbReference type="NCBI Taxonomy" id="585055"/>
    <lineage>
        <taxon>Bacteria</taxon>
        <taxon>Pseudomonadati</taxon>
        <taxon>Pseudomonadota</taxon>
        <taxon>Gammaproteobacteria</taxon>
        <taxon>Enterobacterales</taxon>
        <taxon>Enterobacteriaceae</taxon>
        <taxon>Escherichia</taxon>
    </lineage>
</organism>
<proteinExistence type="inferred from homology"/>
<keyword id="KW-0067">ATP-binding</keyword>
<keyword id="KW-0547">Nucleotide-binding</keyword>
<keyword id="KW-0548">Nucleotidyltransferase</keyword>
<keyword id="KW-1185">Reference proteome</keyword>
<keyword id="KW-0808">Transferase</keyword>